<accession>A0A2R6Q8R5</accession>
<accession>A0A3B8DHU1</accession>
<accession>E5D2U2</accession>
<keyword id="KW-0284">Flavonoid biosynthesis</keyword>
<keyword id="KW-0328">Glycosyltransferase</keyword>
<keyword id="KW-1185">Reference proteome</keyword>
<keyword id="KW-0808">Transferase</keyword>
<comment type="function">
    <text evidence="4 6 7">Involved in anthocyanin biosynthesis by catalyzing the galactosylation of cyanidin (PubMed:21175894, PubMed:29057484, PubMed:30912865). Required for the accumulation of anthocyanin in red-fleshed kiwifruit varieties (PubMed:21175894, PubMed:29057484, PubMed:30912865). Seems to be the key enzyme regulating the accumulation of anthocyanin in red-fleshed kiwi fruits (PubMed:21175894, PubMed:29057484, PubMed:30912865).</text>
</comment>
<comment type="catalytic activity">
    <reaction evidence="4 6">
        <text>cyanidin + UDP-alpha-D-galactose = cyanidin 3-O-beta-D-galactoside + UDP + H(+)</text>
        <dbReference type="Rhea" id="RHEA:35631"/>
        <dbReference type="ChEBI" id="CHEBI:15378"/>
        <dbReference type="ChEBI" id="CHEBI:58223"/>
        <dbReference type="ChEBI" id="CHEBI:66914"/>
        <dbReference type="ChEBI" id="CHEBI:71682"/>
        <dbReference type="ChEBI" id="CHEBI:77935"/>
        <dbReference type="EC" id="2.4.1.294"/>
    </reaction>
    <physiologicalReaction direction="left-to-right" evidence="4 6">
        <dbReference type="Rhea" id="RHEA:35632"/>
    </physiologicalReaction>
</comment>
<comment type="pathway">
    <text evidence="10">Pigment biosynthesis; anthocyanin biosynthesis.</text>
</comment>
<comment type="tissue specificity">
    <text evidence="4 5">Expressed at low levels in stems and leaves (PubMed:25143057). Expressed in ovaries (PubMed:21175894).</text>
</comment>
<comment type="developmental stage">
    <text evidence="4">Expressed in the inner and outer pericarps of developing fruit at 20 days after flowering (DAF) (PubMed:21175894). Expressed only in the inner pericarp from 86 to 126 DAF (PubMed:21175894).</text>
</comment>
<comment type="similarity">
    <text evidence="10">Belongs to the UDP-glycosyltransferase family.</text>
</comment>
<organism>
    <name type="scientific">Actinidia chinensis var. chinensis</name>
    <name type="common">Chinese soft-hair kiwi</name>
    <dbReference type="NCBI Taxonomy" id="1590841"/>
    <lineage>
        <taxon>Eukaryota</taxon>
        <taxon>Viridiplantae</taxon>
        <taxon>Streptophyta</taxon>
        <taxon>Embryophyta</taxon>
        <taxon>Tracheophyta</taxon>
        <taxon>Spermatophyta</taxon>
        <taxon>Magnoliopsida</taxon>
        <taxon>eudicotyledons</taxon>
        <taxon>Gunneridae</taxon>
        <taxon>Pentapetalae</taxon>
        <taxon>asterids</taxon>
        <taxon>Ericales</taxon>
        <taxon>Actinidiaceae</taxon>
        <taxon>Actinidia</taxon>
    </lineage>
</organism>
<sequence length="456" mass="50022">MLITKSSSECHVAVLAFPFSTHPGPLLNLVQRLAVEAPDVIFSFISTAKSNESLFSVPNPENIKPYPVWDGVPEGYVFARKPQEDINLFLKVAAKGFKLAMQAVEVETRRRIGWVMADAFLWFSSDMAEERGISWVPIWMSGGACSLSVHLYTDLIRETVGFSGISGRQNELLKFIPGFSELRLGDLPSGVLLGNLKSPFSIMLHKIGQALPKATTVLINSFEELDPELNKVLNSNFGKFLNIGPSNLTSPHPLSNSDEYGCIPWLAKQRSASVAYIGFGSVAKPKPDEVVAIAEALEASSTPFLWSLRDTSKQYLPEGFLKRTSELGKIVPWAPQVQVLAHSSIGVFITHCGWNSVLETIAGGVPMIGRPFFGDHPINTWMVENVWKIGVRVEGGVFTKSSTMRALELVLSHEKGKKLKDQIGHLRELALKAVGPKGSSSQNFNNLLEVITGHNL</sequence>
<dbReference type="EC" id="2.4.1.294" evidence="4 6"/>
<dbReference type="EMBL" id="GU079683">
    <property type="protein sequence ID" value="ADC34700.1"/>
    <property type="molecule type" value="mRNA"/>
</dbReference>
<dbReference type="EMBL" id="MH817049">
    <property type="protein sequence ID" value="AYJ72756.1"/>
    <property type="molecule type" value="mRNA"/>
</dbReference>
<dbReference type="EMBL" id="NKQK01000018">
    <property type="protein sequence ID" value="PSS04285.1"/>
    <property type="molecule type" value="Genomic_DNA"/>
</dbReference>
<dbReference type="SMR" id="A0A2R6Q8R5"/>
<dbReference type="STRING" id="1590841.A0A2R6Q8R5"/>
<dbReference type="CAZy" id="GT1">
    <property type="family name" value="Glycosyltransferase Family 1"/>
</dbReference>
<dbReference type="EnsemblPlants" id="PSS04285">
    <property type="protein sequence ID" value="PSS04285"/>
    <property type="gene ID" value="CEY00_Acc20131"/>
</dbReference>
<dbReference type="Gramene" id="PSS04285">
    <property type="protein sequence ID" value="PSS04285"/>
    <property type="gene ID" value="CEY00_Acc20131"/>
</dbReference>
<dbReference type="InParanoid" id="A0A2R6Q8R5"/>
<dbReference type="OMA" id="FFWFAKE"/>
<dbReference type="OrthoDB" id="5835829at2759"/>
<dbReference type="BRENDA" id="2.4.1.294">
    <property type="organism ID" value="17373"/>
</dbReference>
<dbReference type="UniPathway" id="UPA00009"/>
<dbReference type="Proteomes" id="UP000241394">
    <property type="component" value="Chromosome LG18"/>
</dbReference>
<dbReference type="GO" id="GO:0102454">
    <property type="term" value="F:cyanidin 3-O-galactosyltransferase activity"/>
    <property type="evidence" value="ECO:0000314"/>
    <property type="project" value="UniProtKB"/>
</dbReference>
<dbReference type="GO" id="GO:0080043">
    <property type="term" value="F:quercetin 3-O-glucosyltransferase activity"/>
    <property type="evidence" value="ECO:0007669"/>
    <property type="project" value="TreeGrafter"/>
</dbReference>
<dbReference type="GO" id="GO:0080044">
    <property type="term" value="F:quercetin 7-O-glucosyltransferase activity"/>
    <property type="evidence" value="ECO:0007669"/>
    <property type="project" value="TreeGrafter"/>
</dbReference>
<dbReference type="GO" id="GO:0009718">
    <property type="term" value="P:anthocyanin-containing compound biosynthetic process"/>
    <property type="evidence" value="ECO:0000314"/>
    <property type="project" value="UniProtKB"/>
</dbReference>
<dbReference type="CDD" id="cd03784">
    <property type="entry name" value="GT1_Gtf-like"/>
    <property type="match status" value="1"/>
</dbReference>
<dbReference type="FunFam" id="3.40.50.2000:FF:000091">
    <property type="entry name" value="Glycosyltransferase"/>
    <property type="match status" value="1"/>
</dbReference>
<dbReference type="FunFam" id="3.40.50.2000:FF:000129">
    <property type="entry name" value="Glycosyltransferase"/>
    <property type="match status" value="1"/>
</dbReference>
<dbReference type="Gene3D" id="3.40.50.2000">
    <property type="entry name" value="Glycogen Phosphorylase B"/>
    <property type="match status" value="2"/>
</dbReference>
<dbReference type="InterPro" id="IPR002213">
    <property type="entry name" value="UDP_glucos_trans"/>
</dbReference>
<dbReference type="InterPro" id="IPR035595">
    <property type="entry name" value="UDP_glycos_trans_CS"/>
</dbReference>
<dbReference type="PANTHER" id="PTHR11926">
    <property type="entry name" value="GLUCOSYL/GLUCURONOSYL TRANSFERASES"/>
    <property type="match status" value="1"/>
</dbReference>
<dbReference type="PANTHER" id="PTHR11926:SF1560">
    <property type="entry name" value="UDP-GLYCOSYLTRANSFERASE 74E1-RELATED"/>
    <property type="match status" value="1"/>
</dbReference>
<dbReference type="Pfam" id="PF00201">
    <property type="entry name" value="UDPGT"/>
    <property type="match status" value="1"/>
</dbReference>
<dbReference type="SUPFAM" id="SSF53756">
    <property type="entry name" value="UDP-Glycosyltransferase/glycogen phosphorylase"/>
    <property type="match status" value="1"/>
</dbReference>
<dbReference type="PROSITE" id="PS00375">
    <property type="entry name" value="UDPGT"/>
    <property type="match status" value="1"/>
</dbReference>
<name>F3GT1_ACTCC</name>
<evidence type="ECO:0000250" key="1">
    <source>
        <dbReference type="UniProtKB" id="A0A0A1HA03"/>
    </source>
</evidence>
<evidence type="ECO:0000250" key="2">
    <source>
        <dbReference type="UniProtKB" id="P51094"/>
    </source>
</evidence>
<evidence type="ECO:0000250" key="3">
    <source>
        <dbReference type="UniProtKB" id="Q9M156"/>
    </source>
</evidence>
<evidence type="ECO:0000269" key="4">
    <source>
    </source>
</evidence>
<evidence type="ECO:0000269" key="5">
    <source>
    </source>
</evidence>
<evidence type="ECO:0000269" key="6">
    <source>
    </source>
</evidence>
<evidence type="ECO:0000269" key="7">
    <source>
    </source>
</evidence>
<evidence type="ECO:0000303" key="8">
    <source>
    </source>
</evidence>
<evidence type="ECO:0000303" key="9">
    <source>
    </source>
</evidence>
<evidence type="ECO:0000305" key="10"/>
<evidence type="ECO:0000312" key="11">
    <source>
        <dbReference type="EMBL" id="PSS04285.1"/>
    </source>
</evidence>
<reference key="1">
    <citation type="journal article" date="2011" name="Plant J.">
        <title>Identification and characterisation of F3GT1 and F3GGT1, two glycosyltransferases responsible for anthocyanin biosynthesis in red-fleshed kiwifruit (Actinidia chinensis).</title>
        <authorList>
            <person name="Montefiori M."/>
            <person name="Espley R.V."/>
            <person name="Stevenson D."/>
            <person name="Cooney J."/>
            <person name="Datson P.M."/>
            <person name="Saiz A."/>
            <person name="Atkinson R.G."/>
            <person name="Hellens R.P."/>
            <person name="Allan A.C."/>
        </authorList>
    </citation>
    <scope>NUCLEOTIDE SEQUENCE [MRNA]</scope>
    <scope>FUNCTION</scope>
    <scope>CATALYTIC ACTIVITY</scope>
    <scope>TISSUE SPECIFICITY</scope>
    <scope>DEVELOPMENTAL STAGE</scope>
</reference>
<reference key="2">
    <citation type="journal article" date="2018" name="Physiol. Plantarum">
        <title>Biochemical and functional characterization of AcUFGT3a, a galactosyltransferase involved in anthocyanin biosynthesis in the red-fleshed kiwifruit (Actinidia chinensis).</title>
        <authorList>
            <person name="Liu Y."/>
            <person name="Zhou B."/>
            <person name="Qi Y."/>
            <person name="Liu C."/>
            <person name="Liu Z."/>
            <person name="Ren X."/>
        </authorList>
    </citation>
    <scope>NUCLEOTIDE SEQUENCE [MRNA]</scope>
    <scope>FUNCTION</scope>
    <scope>CATALYTIC ACTIVITY</scope>
</reference>
<reference key="3">
    <citation type="journal article" date="2018" name="BMC Genomics">
        <title>A manually annotated Actinidia chinensis var. chinensis (kiwifruit) genome highlights the challenges associated with draft genomes and gene prediction in plants.</title>
        <authorList>
            <person name="Pilkington S.M."/>
            <person name="Crowhurst R."/>
            <person name="Hilario E."/>
            <person name="Nardozza S."/>
            <person name="Fraser L."/>
            <person name="Peng Y."/>
            <person name="Gunaseelan K."/>
            <person name="Simpson R."/>
            <person name="Tahir J."/>
            <person name="Deroles S.C."/>
            <person name="Templeton K."/>
            <person name="Luo Z."/>
            <person name="Davy M."/>
            <person name="Cheng C."/>
            <person name="McNeilage M."/>
            <person name="Scaglione D."/>
            <person name="Liu Y."/>
            <person name="Zhang Q."/>
            <person name="Datson P."/>
            <person name="De Silva N."/>
            <person name="Gardiner S.E."/>
            <person name="Bassett H."/>
            <person name="Chagne D."/>
            <person name="McCallum J."/>
            <person name="Dzierzon H."/>
            <person name="Deng C."/>
            <person name="Wang Y.Y."/>
            <person name="Barron L."/>
            <person name="Manako K."/>
            <person name="Bowen J."/>
            <person name="Foster T.M."/>
            <person name="Erridge Z.A."/>
            <person name="Tiffin H."/>
            <person name="Waite C.N."/>
            <person name="Davies K.M."/>
            <person name="Grierson E.P."/>
            <person name="Laing W.A."/>
            <person name="Kirk R."/>
            <person name="Chen X."/>
            <person name="Wood M."/>
            <person name="Montefiori M."/>
            <person name="Brummell D.A."/>
            <person name="Schwinn K.E."/>
            <person name="Catanach A."/>
            <person name="Fullerton C."/>
            <person name="Li D."/>
            <person name="Meiyalaghan S."/>
            <person name="Nieuwenhuizen N."/>
            <person name="Read N."/>
            <person name="Prakash R."/>
            <person name="Hunter D."/>
            <person name="Zhang H."/>
            <person name="McKenzie M."/>
            <person name="Knabel M."/>
            <person name="Harris A."/>
            <person name="Allan A.C."/>
            <person name="Gleave A."/>
            <person name="Chen A."/>
            <person name="Janssen B.J."/>
            <person name="Plunkett B."/>
            <person name="Ampomah-Dwamena C."/>
            <person name="Voogd C."/>
            <person name="Leif D."/>
            <person name="Lafferty D."/>
            <person name="Souleyre E.J.F."/>
            <person name="Varkonyi-Gasic E."/>
            <person name="Gambi F."/>
            <person name="Hanley J."/>
            <person name="Yao J.L."/>
            <person name="Cheung J."/>
            <person name="David K.M."/>
            <person name="Warren B."/>
            <person name="Marsh K."/>
            <person name="Snowden K.C."/>
            <person name="Lin-Wang K."/>
            <person name="Brian L."/>
            <person name="Martinez-Sanchez M."/>
            <person name="Wang M."/>
            <person name="Ileperuma N."/>
            <person name="Macnee N."/>
            <person name="Campin R."/>
            <person name="McAtee P."/>
            <person name="Drummond R.S.M."/>
            <person name="Espley R.V."/>
            <person name="Ireland H.S."/>
            <person name="Wu R."/>
            <person name="Atkinson R.G."/>
            <person name="Karunairetnam S."/>
            <person name="Bulley S."/>
            <person name="Chunkath S."/>
            <person name="Hanley Z."/>
            <person name="Storey R."/>
            <person name="Thrimawithana A.H."/>
            <person name="Thomson S."/>
            <person name="David C."/>
            <person name="Testolin R."/>
            <person name="Huang H."/>
            <person name="Hellens R.P."/>
            <person name="Schaffer R.J."/>
        </authorList>
    </citation>
    <scope>NUCLEOTIDE SEQUENCE [LARGE SCALE GENOMIC DNA]</scope>
    <source>
        <strain>cv. Red5</strain>
    </source>
</reference>
<reference key="4">
    <citation type="journal article" date="2015" name="Physiol. Plantarum">
        <title>High-temperature inhibition of biosynthesis and transportation of anthocyanins results in the poor red coloration in red-fleshed Actinidia chinensis.</title>
        <authorList>
            <person name="Man Y.P."/>
            <person name="Wang Y.C."/>
            <person name="Li Z.Z."/>
            <person name="Jiang Z.W."/>
            <person name="Yang H.L."/>
            <person name="Gong J.J."/>
            <person name="He S.S."/>
            <person name="Wu S.Q."/>
            <person name="Yang Z.Q."/>
            <person name="Zheng J."/>
            <person name="Wang Z.Y."/>
        </authorList>
    </citation>
    <scope>TISSUE SPECIFICITY</scope>
</reference>
<reference key="5">
    <citation type="journal article" date="2019" name="Plant J.">
        <title>A MYB/bHLH complex regulates tissue-specific anthocyanin biosynthesis in the inner pericarp of red-centered kiwifruit Actinidia chinensis cv. Hongyang.</title>
        <authorList>
            <person name="Wang L."/>
            <person name="Tang W."/>
            <person name="Hu Y."/>
            <person name="Zhang Y."/>
            <person name="Sun J."/>
            <person name="Guo X."/>
            <person name="Lu H."/>
            <person name="Yang Y."/>
            <person name="Fang C."/>
            <person name="Niu X."/>
            <person name="Yue J."/>
            <person name="Fei Z."/>
            <person name="Liu Y."/>
        </authorList>
    </citation>
    <scope>FUNCTION</scope>
</reference>
<proteinExistence type="evidence at protein level"/>
<gene>
    <name evidence="8" type="primary">F3GT1</name>
    <name evidence="9" type="synonym">UFGT3A</name>
    <name evidence="11" type="ORF">CEY00_Acc20131</name>
</gene>
<protein>
    <recommendedName>
        <fullName evidence="10">Anthocyanidin 3-O-galactosyltransferase F3GT1</fullName>
        <ecNumber evidence="4 6">2.4.1.294</ecNumber>
    </recommendedName>
    <alternativeName>
        <fullName evidence="8">Flavonoid 3-O-glycosyltransferase 1</fullName>
    </alternativeName>
    <alternativeName>
        <fullName evidence="9">UDP-galactose flavonoid 3-O-galactosyltransferase 3A</fullName>
        <shortName evidence="9">AcUFGT3a</shortName>
    </alternativeName>
</protein>
<feature type="chain" id="PRO_0000448078" description="Anthocyanidin 3-O-galactosyltransferase F3GT1">
    <location>
        <begin position="1"/>
        <end position="456"/>
    </location>
</feature>
<feature type="active site" description="Proton acceptor" evidence="1">
    <location>
        <position position="22"/>
    </location>
</feature>
<feature type="active site" description="Charge relay" evidence="1">
    <location>
        <position position="118"/>
    </location>
</feature>
<feature type="binding site" evidence="2">
    <location>
        <position position="20"/>
    </location>
    <ligand>
        <name>an anthocyanidin</name>
        <dbReference type="ChEBI" id="CHEBI:143576"/>
    </ligand>
</feature>
<feature type="binding site" evidence="2">
    <location>
        <position position="22"/>
    </location>
    <ligand>
        <name>an anthocyanidin</name>
        <dbReference type="ChEBI" id="CHEBI:143576"/>
    </ligand>
</feature>
<feature type="binding site" evidence="2">
    <location>
        <position position="83"/>
    </location>
    <ligand>
        <name>an anthocyanidin</name>
        <dbReference type="ChEBI" id="CHEBI:143576"/>
    </ligand>
</feature>
<feature type="binding site" evidence="2">
    <location>
        <position position="150"/>
    </location>
    <ligand>
        <name>an anthocyanidin</name>
        <dbReference type="ChEBI" id="CHEBI:143576"/>
    </ligand>
</feature>
<feature type="binding site" evidence="3">
    <location>
        <position position="281"/>
    </location>
    <ligand>
        <name>UDP</name>
        <dbReference type="ChEBI" id="CHEBI:58223"/>
    </ligand>
</feature>
<feature type="binding site" evidence="3">
    <location>
        <position position="333"/>
    </location>
    <ligand>
        <name>UDP</name>
        <dbReference type="ChEBI" id="CHEBI:58223"/>
    </ligand>
</feature>
<feature type="binding site" evidence="3">
    <location>
        <position position="334"/>
    </location>
    <ligand>
        <name>UDP</name>
        <dbReference type="ChEBI" id="CHEBI:58223"/>
    </ligand>
</feature>
<feature type="binding site" evidence="3">
    <location>
        <position position="351"/>
    </location>
    <ligand>
        <name>UDP</name>
        <dbReference type="ChEBI" id="CHEBI:58223"/>
    </ligand>
</feature>
<feature type="binding site" evidence="3">
    <location>
        <position position="355"/>
    </location>
    <ligand>
        <name>UDP</name>
        <dbReference type="ChEBI" id="CHEBI:58223"/>
    </ligand>
</feature>
<feature type="binding site" evidence="3">
    <location>
        <position position="356"/>
    </location>
    <ligand>
        <name>UDP</name>
        <dbReference type="ChEBI" id="CHEBI:58223"/>
    </ligand>
</feature>
<feature type="binding site" evidence="3">
    <location>
        <position position="359"/>
    </location>
    <ligand>
        <name>UDP</name>
        <dbReference type="ChEBI" id="CHEBI:58223"/>
    </ligand>
</feature>
<feature type="binding site" evidence="2">
    <location>
        <position position="374"/>
    </location>
    <ligand>
        <name>an anthocyanidin</name>
        <dbReference type="ChEBI" id="CHEBI:143576"/>
    </ligand>
</feature>
<feature type="sequence conflict" description="In Ref. 2; AYJ72756." evidence="10" ref="2">
    <original>V</original>
    <variation>L</variation>
    <location>
        <position position="14"/>
    </location>
</feature>
<feature type="sequence conflict" description="In Ref. 2; AYJ72756 and 1; ADC34700." evidence="10" ref="2 1">
    <original>R</original>
    <variation>G</variation>
    <location>
        <position position="80"/>
    </location>
</feature>
<feature type="sequence conflict" description="In Ref. 2; AYJ72756." evidence="10" ref="2">
    <original>TR</original>
    <variation>IG</variation>
    <location>
        <begin position="108"/>
        <end position="109"/>
    </location>
</feature>
<feature type="sequence conflict" description="In Ref. 1; ADC34700." evidence="10" ref="1">
    <original>R</original>
    <variation>G</variation>
    <location>
        <position position="109"/>
    </location>
</feature>
<feature type="sequence conflict" description="In Ref. 2; AYJ72756 and 1; ADC34700." evidence="10" ref="2 1">
    <original>S</original>
    <variation>P</variation>
    <location>
        <position position="134"/>
    </location>
</feature>
<feature type="sequence conflict" description="In Ref. 1; ADC34700 and 2; AYJ72756." evidence="10" ref="1 2">
    <location>
        <position position="142"/>
    </location>
</feature>
<feature type="sequence conflict" description="In Ref. 2; AYJ72756." evidence="10" ref="2">
    <original>LS</original>
    <variation>FA</variation>
    <location>
        <begin position="147"/>
        <end position="148"/>
    </location>
</feature>
<feature type="sequence conflict" description="In Ref. 2; AYJ72756." evidence="10" ref="2">
    <original>A</original>
    <variation>S</variation>
    <location>
        <position position="272"/>
    </location>
</feature>
<feature type="sequence conflict" description="In Ref. 1; ADC34700." evidence="10" ref="1">
    <original>I</original>
    <variation>M</variation>
    <location>
        <position position="378"/>
    </location>
</feature>